<accession>Q8FBM1</accession>
<gene>
    <name evidence="2" type="primary">metE</name>
    <name type="ordered locus">c4751</name>
</gene>
<protein>
    <recommendedName>
        <fullName evidence="2">5-methyltetrahydropteroyltriglutamate--homocysteine methyltransferase</fullName>
        <ecNumber evidence="2">2.1.1.14</ecNumber>
    </recommendedName>
    <alternativeName>
        <fullName evidence="2">Cobalamin-independent methionine synthase</fullName>
    </alternativeName>
    <alternativeName>
        <fullName evidence="2">Methionine synthase, vitamin-B12 independent isozyme</fullName>
    </alternativeName>
</protein>
<dbReference type="EC" id="2.1.1.14" evidence="2"/>
<dbReference type="EMBL" id="AE014075">
    <property type="protein sequence ID" value="AAN83184.1"/>
    <property type="molecule type" value="Genomic_DNA"/>
</dbReference>
<dbReference type="RefSeq" id="WP_000153937.1">
    <property type="nucleotide sequence ID" value="NZ_CP051263.1"/>
</dbReference>
<dbReference type="SMR" id="Q8FBM1"/>
<dbReference type="STRING" id="199310.c4751"/>
<dbReference type="KEGG" id="ecc:c4751"/>
<dbReference type="eggNOG" id="COG0620">
    <property type="taxonomic scope" value="Bacteria"/>
</dbReference>
<dbReference type="HOGENOM" id="CLU_013175_0_0_6"/>
<dbReference type="BioCyc" id="ECOL199310:C4751-MONOMER"/>
<dbReference type="UniPathway" id="UPA00051">
    <property type="reaction ID" value="UER00082"/>
</dbReference>
<dbReference type="Proteomes" id="UP000001410">
    <property type="component" value="Chromosome"/>
</dbReference>
<dbReference type="GO" id="GO:0003871">
    <property type="term" value="F:5-methyltetrahydropteroyltriglutamate-homocysteine S-methyltransferase activity"/>
    <property type="evidence" value="ECO:0007669"/>
    <property type="project" value="UniProtKB-UniRule"/>
</dbReference>
<dbReference type="GO" id="GO:0008270">
    <property type="term" value="F:zinc ion binding"/>
    <property type="evidence" value="ECO:0007669"/>
    <property type="project" value="InterPro"/>
</dbReference>
<dbReference type="GO" id="GO:0009086">
    <property type="term" value="P:methionine biosynthetic process"/>
    <property type="evidence" value="ECO:0007669"/>
    <property type="project" value="UniProtKB-UniRule"/>
</dbReference>
<dbReference type="GO" id="GO:0032259">
    <property type="term" value="P:methylation"/>
    <property type="evidence" value="ECO:0007669"/>
    <property type="project" value="UniProtKB-KW"/>
</dbReference>
<dbReference type="CDD" id="cd03311">
    <property type="entry name" value="CIMS_C_terminal_like"/>
    <property type="match status" value="1"/>
</dbReference>
<dbReference type="CDD" id="cd03312">
    <property type="entry name" value="CIMS_N_terminal_like"/>
    <property type="match status" value="1"/>
</dbReference>
<dbReference type="FunFam" id="3.20.20.210:FF:000002">
    <property type="entry name" value="5-methyltetrahydropteroyltriglutamate--homocysteine methyltransferase"/>
    <property type="match status" value="1"/>
</dbReference>
<dbReference type="FunFam" id="3.20.20.210:FF:000003">
    <property type="entry name" value="5-methyltetrahydropteroyltriglutamate--homocysteine methyltransferase"/>
    <property type="match status" value="1"/>
</dbReference>
<dbReference type="Gene3D" id="3.20.20.210">
    <property type="match status" value="2"/>
</dbReference>
<dbReference type="HAMAP" id="MF_00172">
    <property type="entry name" value="Meth_synth"/>
    <property type="match status" value="1"/>
</dbReference>
<dbReference type="InterPro" id="IPR013215">
    <property type="entry name" value="Cbl-indep_Met_Synth_N"/>
</dbReference>
<dbReference type="InterPro" id="IPR006276">
    <property type="entry name" value="Cobalamin-indep_Met_synthase"/>
</dbReference>
<dbReference type="InterPro" id="IPR002629">
    <property type="entry name" value="Met_Synth_C/arc"/>
</dbReference>
<dbReference type="InterPro" id="IPR038071">
    <property type="entry name" value="UROD/MetE-like_sf"/>
</dbReference>
<dbReference type="NCBIfam" id="TIGR01371">
    <property type="entry name" value="met_syn_B12ind"/>
    <property type="match status" value="1"/>
</dbReference>
<dbReference type="NCBIfam" id="NF003556">
    <property type="entry name" value="PRK05222.1"/>
    <property type="match status" value="1"/>
</dbReference>
<dbReference type="PANTHER" id="PTHR30519">
    <property type="entry name" value="5-METHYLTETRAHYDROPTEROYLTRIGLUTAMATE--HOMOCYSTEINE METHYLTRANSFERASE"/>
    <property type="match status" value="1"/>
</dbReference>
<dbReference type="Pfam" id="PF08267">
    <property type="entry name" value="Meth_synt_1"/>
    <property type="match status" value="1"/>
</dbReference>
<dbReference type="Pfam" id="PF01717">
    <property type="entry name" value="Meth_synt_2"/>
    <property type="match status" value="1"/>
</dbReference>
<dbReference type="PIRSF" id="PIRSF000382">
    <property type="entry name" value="MeTrfase_B12_ind"/>
    <property type="match status" value="1"/>
</dbReference>
<dbReference type="SUPFAM" id="SSF51726">
    <property type="entry name" value="UROD/MetE-like"/>
    <property type="match status" value="2"/>
</dbReference>
<organism>
    <name type="scientific">Escherichia coli O6:H1 (strain CFT073 / ATCC 700928 / UPEC)</name>
    <dbReference type="NCBI Taxonomy" id="199310"/>
    <lineage>
        <taxon>Bacteria</taxon>
        <taxon>Pseudomonadati</taxon>
        <taxon>Pseudomonadota</taxon>
        <taxon>Gammaproteobacteria</taxon>
        <taxon>Enterobacterales</taxon>
        <taxon>Enterobacteriaceae</taxon>
        <taxon>Escherichia</taxon>
    </lineage>
</organism>
<name>METE_ECOL6</name>
<proteinExistence type="inferred from homology"/>
<reference key="1">
    <citation type="journal article" date="2002" name="Proc. Natl. Acad. Sci. U.S.A.">
        <title>Extensive mosaic structure revealed by the complete genome sequence of uropathogenic Escherichia coli.</title>
        <authorList>
            <person name="Welch R.A."/>
            <person name="Burland V."/>
            <person name="Plunkett G. III"/>
            <person name="Redford P."/>
            <person name="Roesch P."/>
            <person name="Rasko D."/>
            <person name="Buckles E.L."/>
            <person name="Liou S.-R."/>
            <person name="Boutin A."/>
            <person name="Hackett J."/>
            <person name="Stroud D."/>
            <person name="Mayhew G.F."/>
            <person name="Rose D.J."/>
            <person name="Zhou S."/>
            <person name="Schwartz D.C."/>
            <person name="Perna N.T."/>
            <person name="Mobley H.L.T."/>
            <person name="Donnenberg M.S."/>
            <person name="Blattner F.R."/>
        </authorList>
    </citation>
    <scope>NUCLEOTIDE SEQUENCE [LARGE SCALE GENOMIC DNA]</scope>
    <source>
        <strain>CFT073 / ATCC 700928 / UPEC</strain>
    </source>
</reference>
<evidence type="ECO:0000250" key="1"/>
<evidence type="ECO:0000255" key="2">
    <source>
        <dbReference type="HAMAP-Rule" id="MF_00172"/>
    </source>
</evidence>
<sequence>MTILNHTLGFPRVGLRRELKKAQESYWAGNSTREELLAVGRELRARHWDQQKQAGIDLLPVGDFAWYDHVLTTSLLLGNVPPRHQNKDGSVDIDTLFRIGRGRAPTGEPAAAAEMTKWFNTNYHYMVPEFVKGQQFKLTWTQLLEEVDEALALGHKVKPVLLGPITYLWLGKVKGEQFDRLSLLNDILPVYQQVLAELAKRGIEWVQIDEPALVLELPQAWLDAYKPAYDALQGQVKLLLTTYFEGVTPNLDTITALPVQGLHVDLVHGKDDVAELHKRLPSDWLLSAGLINGRNVWRADLTEKYAQIKDIVGKRDLWVASSCSLLHSPIDLSVETRLDAEVKSWFAFALQKCHELALLRDALNSGDTAALAEWSAPIQARRHSTRVHNPAVEKRLAAITAQDSQRANVYEVRAEAQRARFKLPAWPTTTIGSFPQTTEIRTLRLDFKKGNLDANNYRTGIAEHIKQAIVEQERLGLDVLVHGEAERNDMVEYFGEHLDGFVFTQNGWVQSYGSRCVKPPIVIGDVSRPAPITVEWAKYAQSLTDKPVKGMLTGPVTILCWSFPREDVSRETIAKQIALALRDEVADLEAAGIGIIQIDEPALREGLPLRRSDWDAYLQWGVEAFRINAAVAKDDTQIHTHMCYCEFNDIMDSIAALDADVITIETSRSDMELLESFEEFDYPNEIGPGVYDIHSPNVPSVEWIEALLKKAAKRIPAERLWVNPDCGLKTRGWPETRAALANMVQAAQNLRRG</sequence>
<feature type="initiator methionine" description="Removed" evidence="1">
    <location>
        <position position="1"/>
    </location>
</feature>
<feature type="chain" id="PRO_0000098631" description="5-methyltetrahydropteroyltriglutamate--homocysteine methyltransferase">
    <location>
        <begin position="2"/>
        <end position="753"/>
    </location>
</feature>
<feature type="active site" description="Proton donor" evidence="2">
    <location>
        <position position="694"/>
    </location>
</feature>
<feature type="binding site" evidence="2">
    <location>
        <begin position="17"/>
        <end position="20"/>
    </location>
    <ligand>
        <name>5-methyltetrahydropteroyltri-L-glutamate</name>
        <dbReference type="ChEBI" id="CHEBI:58207"/>
    </ligand>
</feature>
<feature type="binding site" evidence="2">
    <location>
        <position position="117"/>
    </location>
    <ligand>
        <name>5-methyltetrahydropteroyltri-L-glutamate</name>
        <dbReference type="ChEBI" id="CHEBI:58207"/>
    </ligand>
</feature>
<feature type="binding site" evidence="2">
    <location>
        <begin position="431"/>
        <end position="433"/>
    </location>
    <ligand>
        <name>L-homocysteine</name>
        <dbReference type="ChEBI" id="CHEBI:58199"/>
    </ligand>
</feature>
<feature type="binding site" evidence="2">
    <location>
        <begin position="431"/>
        <end position="433"/>
    </location>
    <ligand>
        <name>L-methionine</name>
        <dbReference type="ChEBI" id="CHEBI:57844"/>
    </ligand>
</feature>
<feature type="binding site" evidence="2">
    <location>
        <position position="484"/>
    </location>
    <ligand>
        <name>L-homocysteine</name>
        <dbReference type="ChEBI" id="CHEBI:58199"/>
    </ligand>
</feature>
<feature type="binding site" evidence="2">
    <location>
        <position position="484"/>
    </location>
    <ligand>
        <name>L-methionine</name>
        <dbReference type="ChEBI" id="CHEBI:57844"/>
    </ligand>
</feature>
<feature type="binding site" evidence="2">
    <location>
        <begin position="515"/>
        <end position="516"/>
    </location>
    <ligand>
        <name>5-methyltetrahydropteroyltri-L-glutamate</name>
        <dbReference type="ChEBI" id="CHEBI:58207"/>
    </ligand>
</feature>
<feature type="binding site" evidence="2">
    <location>
        <position position="561"/>
    </location>
    <ligand>
        <name>5-methyltetrahydropteroyltri-L-glutamate</name>
        <dbReference type="ChEBI" id="CHEBI:58207"/>
    </ligand>
</feature>
<feature type="binding site" evidence="2">
    <location>
        <position position="599"/>
    </location>
    <ligand>
        <name>L-homocysteine</name>
        <dbReference type="ChEBI" id="CHEBI:58199"/>
    </ligand>
</feature>
<feature type="binding site" evidence="2">
    <location>
        <position position="599"/>
    </location>
    <ligand>
        <name>L-methionine</name>
        <dbReference type="ChEBI" id="CHEBI:57844"/>
    </ligand>
</feature>
<feature type="binding site" evidence="2">
    <location>
        <position position="605"/>
    </location>
    <ligand>
        <name>5-methyltetrahydropteroyltri-L-glutamate</name>
        <dbReference type="ChEBI" id="CHEBI:58207"/>
    </ligand>
</feature>
<feature type="binding site" evidence="2">
    <location>
        <position position="641"/>
    </location>
    <ligand>
        <name>Zn(2+)</name>
        <dbReference type="ChEBI" id="CHEBI:29105"/>
        <note>catalytic</note>
    </ligand>
</feature>
<feature type="binding site" evidence="2">
    <location>
        <position position="643"/>
    </location>
    <ligand>
        <name>Zn(2+)</name>
        <dbReference type="ChEBI" id="CHEBI:29105"/>
        <note>catalytic</note>
    </ligand>
</feature>
<feature type="binding site" evidence="2">
    <location>
        <position position="665"/>
    </location>
    <ligand>
        <name>Zn(2+)</name>
        <dbReference type="ChEBI" id="CHEBI:29105"/>
        <note>catalytic</note>
    </ligand>
</feature>
<feature type="binding site" evidence="2">
    <location>
        <position position="726"/>
    </location>
    <ligand>
        <name>Zn(2+)</name>
        <dbReference type="ChEBI" id="CHEBI:29105"/>
        <note>catalytic</note>
    </ligand>
</feature>
<keyword id="KW-0028">Amino-acid biosynthesis</keyword>
<keyword id="KW-0479">Metal-binding</keyword>
<keyword id="KW-0486">Methionine biosynthesis</keyword>
<keyword id="KW-0489">Methyltransferase</keyword>
<keyword id="KW-1185">Reference proteome</keyword>
<keyword id="KW-0677">Repeat</keyword>
<keyword id="KW-0808">Transferase</keyword>
<keyword id="KW-0862">Zinc</keyword>
<comment type="function">
    <text evidence="2">Catalyzes the transfer of a methyl group from 5-methyltetrahydrofolate to homocysteine resulting in methionine formation.</text>
</comment>
<comment type="catalytic activity">
    <reaction evidence="2">
        <text>5-methyltetrahydropteroyltri-L-glutamate + L-homocysteine = tetrahydropteroyltri-L-glutamate + L-methionine</text>
        <dbReference type="Rhea" id="RHEA:21196"/>
        <dbReference type="ChEBI" id="CHEBI:57844"/>
        <dbReference type="ChEBI" id="CHEBI:58140"/>
        <dbReference type="ChEBI" id="CHEBI:58199"/>
        <dbReference type="ChEBI" id="CHEBI:58207"/>
        <dbReference type="EC" id="2.1.1.14"/>
    </reaction>
</comment>
<comment type="cofactor">
    <cofactor evidence="2">
        <name>Zn(2+)</name>
        <dbReference type="ChEBI" id="CHEBI:29105"/>
    </cofactor>
    <text evidence="2">Binds 1 zinc ion per subunit.</text>
</comment>
<comment type="pathway">
    <text evidence="2">Amino-acid biosynthesis; L-methionine biosynthesis via de novo pathway; L-methionine from L-homocysteine (MetE route): step 1/1.</text>
</comment>
<comment type="similarity">
    <text evidence="2">Belongs to the vitamin-B12 independent methionine synthase family.</text>
</comment>